<sequence length="114" mass="13215">MPRSVNSVAKRARRKKIMKQAKGFFGRRKNVWTVAKNAVEKAMSYAYRDRKQNKRNFRSLWIQRINAGARLEGMSYSQFMGKVKANGIELNRKVLADLAMNHPEAFKAILNKVK</sequence>
<comment type="function">
    <text evidence="1">Binds directly to 23S ribosomal RNA and is necessary for the in vitro assembly process of the 50S ribosomal subunit. It is not involved in the protein synthesizing functions of that subunit.</text>
</comment>
<comment type="similarity">
    <text evidence="1">Belongs to the bacterial ribosomal protein bL20 family.</text>
</comment>
<feature type="chain" id="PRO_1000080072" description="Large ribosomal subunit protein bL20">
    <location>
        <begin position="1"/>
        <end position="114"/>
    </location>
</feature>
<dbReference type="EMBL" id="CP000685">
    <property type="protein sequence ID" value="ABQ03065.1"/>
    <property type="molecule type" value="Genomic_DNA"/>
</dbReference>
<dbReference type="RefSeq" id="WP_008464948.1">
    <property type="nucleotide sequence ID" value="NZ_MUGZ01000005.1"/>
</dbReference>
<dbReference type="SMR" id="A5FP04"/>
<dbReference type="STRING" id="376686.Fjoh_0027"/>
<dbReference type="KEGG" id="fjo:Fjoh_0027"/>
<dbReference type="eggNOG" id="COG0292">
    <property type="taxonomic scope" value="Bacteria"/>
</dbReference>
<dbReference type="HOGENOM" id="CLU_123265_0_1_10"/>
<dbReference type="OrthoDB" id="9808966at2"/>
<dbReference type="Proteomes" id="UP000006694">
    <property type="component" value="Chromosome"/>
</dbReference>
<dbReference type="GO" id="GO:1990904">
    <property type="term" value="C:ribonucleoprotein complex"/>
    <property type="evidence" value="ECO:0007669"/>
    <property type="project" value="UniProtKB-KW"/>
</dbReference>
<dbReference type="GO" id="GO:0005840">
    <property type="term" value="C:ribosome"/>
    <property type="evidence" value="ECO:0007669"/>
    <property type="project" value="UniProtKB-KW"/>
</dbReference>
<dbReference type="GO" id="GO:0019843">
    <property type="term" value="F:rRNA binding"/>
    <property type="evidence" value="ECO:0007669"/>
    <property type="project" value="UniProtKB-UniRule"/>
</dbReference>
<dbReference type="GO" id="GO:0003735">
    <property type="term" value="F:structural constituent of ribosome"/>
    <property type="evidence" value="ECO:0007669"/>
    <property type="project" value="InterPro"/>
</dbReference>
<dbReference type="GO" id="GO:0000027">
    <property type="term" value="P:ribosomal large subunit assembly"/>
    <property type="evidence" value="ECO:0007669"/>
    <property type="project" value="UniProtKB-UniRule"/>
</dbReference>
<dbReference type="GO" id="GO:0006412">
    <property type="term" value="P:translation"/>
    <property type="evidence" value="ECO:0007669"/>
    <property type="project" value="InterPro"/>
</dbReference>
<dbReference type="CDD" id="cd07026">
    <property type="entry name" value="Ribosomal_L20"/>
    <property type="match status" value="1"/>
</dbReference>
<dbReference type="FunFam" id="1.10.1900.20:FF:000001">
    <property type="entry name" value="50S ribosomal protein L20"/>
    <property type="match status" value="1"/>
</dbReference>
<dbReference type="Gene3D" id="6.10.160.10">
    <property type="match status" value="1"/>
</dbReference>
<dbReference type="Gene3D" id="1.10.1900.20">
    <property type="entry name" value="Ribosomal protein L20"/>
    <property type="match status" value="1"/>
</dbReference>
<dbReference type="HAMAP" id="MF_00382">
    <property type="entry name" value="Ribosomal_bL20"/>
    <property type="match status" value="1"/>
</dbReference>
<dbReference type="InterPro" id="IPR005813">
    <property type="entry name" value="Ribosomal_bL20"/>
</dbReference>
<dbReference type="InterPro" id="IPR049946">
    <property type="entry name" value="RIBOSOMAL_L20_CS"/>
</dbReference>
<dbReference type="InterPro" id="IPR035566">
    <property type="entry name" value="Ribosomal_protein_bL20_C"/>
</dbReference>
<dbReference type="NCBIfam" id="TIGR01032">
    <property type="entry name" value="rplT_bact"/>
    <property type="match status" value="1"/>
</dbReference>
<dbReference type="PANTHER" id="PTHR10986">
    <property type="entry name" value="39S RIBOSOMAL PROTEIN L20"/>
    <property type="match status" value="1"/>
</dbReference>
<dbReference type="Pfam" id="PF00453">
    <property type="entry name" value="Ribosomal_L20"/>
    <property type="match status" value="1"/>
</dbReference>
<dbReference type="PRINTS" id="PR00062">
    <property type="entry name" value="RIBOSOMALL20"/>
</dbReference>
<dbReference type="SUPFAM" id="SSF74731">
    <property type="entry name" value="Ribosomal protein L20"/>
    <property type="match status" value="1"/>
</dbReference>
<dbReference type="PROSITE" id="PS00937">
    <property type="entry name" value="RIBOSOMAL_L20"/>
    <property type="match status" value="1"/>
</dbReference>
<accession>A5FP04</accession>
<organism>
    <name type="scientific">Flavobacterium johnsoniae (strain ATCC 17061 / DSM 2064 / JCM 8514 / BCRC 14874 / CCUG 350202 / NBRC 14942 / NCIMB 11054 / UW101)</name>
    <name type="common">Cytophaga johnsonae</name>
    <dbReference type="NCBI Taxonomy" id="376686"/>
    <lineage>
        <taxon>Bacteria</taxon>
        <taxon>Pseudomonadati</taxon>
        <taxon>Bacteroidota</taxon>
        <taxon>Flavobacteriia</taxon>
        <taxon>Flavobacteriales</taxon>
        <taxon>Flavobacteriaceae</taxon>
        <taxon>Flavobacterium</taxon>
    </lineage>
</organism>
<reference key="1">
    <citation type="journal article" date="2009" name="Appl. Environ. Microbiol.">
        <title>Novel features of the polysaccharide-digesting gliding bacterium Flavobacterium johnsoniae as revealed by genome sequence analysis.</title>
        <authorList>
            <person name="McBride M.J."/>
            <person name="Xie G."/>
            <person name="Martens E.C."/>
            <person name="Lapidus A."/>
            <person name="Henrissat B."/>
            <person name="Rhodes R.G."/>
            <person name="Goltsman E."/>
            <person name="Wang W."/>
            <person name="Xu J."/>
            <person name="Hunnicutt D.W."/>
            <person name="Staroscik A.M."/>
            <person name="Hoover T.R."/>
            <person name="Cheng Y.Q."/>
            <person name="Stein J.L."/>
        </authorList>
    </citation>
    <scope>NUCLEOTIDE SEQUENCE [LARGE SCALE GENOMIC DNA]</scope>
    <source>
        <strain>ATCC 17061 / DSM 2064 / JCM 8514 / BCRC 14874 / CCUG 350202 / NBRC 14942 / NCIMB 11054 / UW101</strain>
    </source>
</reference>
<proteinExistence type="inferred from homology"/>
<gene>
    <name evidence="1" type="primary">rplT</name>
    <name type="ordered locus">Fjoh_0027</name>
</gene>
<protein>
    <recommendedName>
        <fullName evidence="1">Large ribosomal subunit protein bL20</fullName>
    </recommendedName>
    <alternativeName>
        <fullName evidence="2">50S ribosomal protein L20</fullName>
    </alternativeName>
</protein>
<keyword id="KW-0687">Ribonucleoprotein</keyword>
<keyword id="KW-0689">Ribosomal protein</keyword>
<keyword id="KW-0694">RNA-binding</keyword>
<keyword id="KW-0699">rRNA-binding</keyword>
<name>RL20_FLAJ1</name>
<evidence type="ECO:0000255" key="1">
    <source>
        <dbReference type="HAMAP-Rule" id="MF_00382"/>
    </source>
</evidence>
<evidence type="ECO:0000305" key="2"/>